<comment type="subcellular location">
    <subcellularLocation>
        <location evidence="1">Membrane</location>
        <topology evidence="1">Multi-pass membrane protein</topology>
    </subcellularLocation>
</comment>
<comment type="similarity">
    <text evidence="3">Belongs to the amino acid/polyamine transporter 2 family. Amino acid/auxin permease (AAAP) (TC 2.A.18.5) subfamily.</text>
</comment>
<comment type="sequence caution" evidence="3">
    <conflict type="erroneous gene model prediction">
        <sequence resource="EMBL-CDS" id="BAA95749"/>
    </conflict>
</comment>
<organism>
    <name type="scientific">Arabidopsis thaliana</name>
    <name type="common">Mouse-ear cress</name>
    <dbReference type="NCBI Taxonomy" id="3702"/>
    <lineage>
        <taxon>Eukaryota</taxon>
        <taxon>Viridiplantae</taxon>
        <taxon>Streptophyta</taxon>
        <taxon>Embryophyta</taxon>
        <taxon>Tracheophyta</taxon>
        <taxon>Spermatophyta</taxon>
        <taxon>Magnoliopsida</taxon>
        <taxon>eudicotyledons</taxon>
        <taxon>Gunneridae</taxon>
        <taxon>Pentapetalae</taxon>
        <taxon>rosids</taxon>
        <taxon>malvids</taxon>
        <taxon>Brassicales</taxon>
        <taxon>Brassicaceae</taxon>
        <taxon>Camelineae</taxon>
        <taxon>Arabidopsis</taxon>
    </lineage>
</organism>
<sequence>MEEDNQEIQRDNVGSSSFFKTCFNALNALSGIGILSVPYSLARGGWLSLSLLLLLAVTAFYTSLLITKCMNADRNIKTYPDIGERAFGRPGRIIVSVFMHLELYLVTTGFLILEGDNLHNLFPGFTIEMIGLRLNGKQAFMATVAFVIMPTLWWDNLSVLSYVSMSGVLATTVTLGSISWIGAFDGIGFHQKGKLINWSGIPTALSLYAFCYGAHPVLPTLYSSMKSKHQFNNVLLICFILCTIGYTSMAVLGYLMYGSQTLSQITLNLPIHKTSSKVAIYTTLVNPVAKYALMITPTVNTIKDWFPSRYSKKAYLHLLISTFFIISSVVIAETLPFFGYMMSLVGALLSVTVSILLPCLCYLKIFGNYKKIGCETIMLFGMVVMSVFVGVIGTYIALRDIIGSV</sequence>
<evidence type="ECO:0000255" key="1"/>
<evidence type="ECO:0000303" key="2">
    <source>
    </source>
</evidence>
<evidence type="ECO:0000305" key="3"/>
<evidence type="ECO:0000312" key="4">
    <source>
        <dbReference type="Araport" id="AT3G28960"/>
    </source>
</evidence>
<evidence type="ECO:0000312" key="5">
    <source>
        <dbReference type="EMBL" id="BAA95749.1"/>
    </source>
</evidence>
<accession>F4J1Q9</accession>
<accession>Q9MBG9</accession>
<name>AVT1I_ARATH</name>
<keyword id="KW-0029">Amino-acid transport</keyword>
<keyword id="KW-0472">Membrane</keyword>
<keyword id="KW-1185">Reference proteome</keyword>
<keyword id="KW-0812">Transmembrane</keyword>
<keyword id="KW-1133">Transmembrane helix</keyword>
<keyword id="KW-0813">Transport</keyword>
<protein>
    <recommendedName>
        <fullName evidence="3">Amino acid transporter AVT1I</fullName>
        <shortName evidence="2">AtAvt1I</shortName>
    </recommendedName>
</protein>
<reference key="1">
    <citation type="journal article" date="2000" name="DNA Res.">
        <title>Structural analysis of Arabidopsis thaliana chromosome 3. I. Sequence features of the regions of 4,504,864 bp covered by sixty P1 and TAC clones.</title>
        <authorList>
            <person name="Sato S."/>
            <person name="Nakamura Y."/>
            <person name="Kaneko T."/>
            <person name="Katoh T."/>
            <person name="Asamizu E."/>
            <person name="Tabata S."/>
        </authorList>
    </citation>
    <scope>NUCLEOTIDE SEQUENCE [LARGE SCALE GENOMIC DNA]</scope>
    <source>
        <strain>cv. Columbia</strain>
    </source>
</reference>
<reference key="2">
    <citation type="journal article" date="2017" name="Plant J.">
        <title>Araport11: a complete reannotation of the Arabidopsis thaliana reference genome.</title>
        <authorList>
            <person name="Cheng C.Y."/>
            <person name="Krishnakumar V."/>
            <person name="Chan A.P."/>
            <person name="Thibaud-Nissen F."/>
            <person name="Schobel S."/>
            <person name="Town C.D."/>
        </authorList>
    </citation>
    <scope>GENOME REANNOTATION</scope>
    <source>
        <strain>cv. Columbia</strain>
    </source>
</reference>
<reference key="3">
    <citation type="journal article" date="2017" name="FEBS Lett.">
        <title>Functional identification of AtAVT3, a family of vacuolar amino acid transporters, in Arabidopsis.</title>
        <authorList>
            <person name="Fujiki Y."/>
            <person name="Teshima H."/>
            <person name="Kashiwao S."/>
            <person name="Kawano-Kawada M."/>
            <person name="Ohsumi Y."/>
            <person name="Kakinuma Y."/>
            <person name="Sekito T."/>
        </authorList>
    </citation>
    <scope>GENE FAMILY</scope>
    <scope>NOMENCLATURE</scope>
</reference>
<feature type="chain" id="PRO_0000440110" description="Amino acid transporter AVT1I">
    <location>
        <begin position="1"/>
        <end position="405"/>
    </location>
</feature>
<feature type="transmembrane region" description="Helical; Name=1" evidence="1">
    <location>
        <begin position="22"/>
        <end position="42"/>
    </location>
</feature>
<feature type="transmembrane region" description="Helical; Name=2" evidence="1">
    <location>
        <begin position="46"/>
        <end position="66"/>
    </location>
</feature>
<feature type="transmembrane region" description="Helical; Name=3" evidence="1">
    <location>
        <begin position="93"/>
        <end position="113"/>
    </location>
</feature>
<feature type="transmembrane region" description="Helical; Name=4" evidence="1">
    <location>
        <begin position="140"/>
        <end position="160"/>
    </location>
</feature>
<feature type="transmembrane region" description="Helical; Name=5" evidence="1">
    <location>
        <begin position="169"/>
        <end position="189"/>
    </location>
</feature>
<feature type="transmembrane region" description="Helical; Name=6" evidence="1">
    <location>
        <begin position="201"/>
        <end position="221"/>
    </location>
</feature>
<feature type="transmembrane region" description="Helical; Name=7" evidence="1">
    <location>
        <begin position="234"/>
        <end position="254"/>
    </location>
</feature>
<feature type="transmembrane region" description="Helical; Name=8" evidence="1">
    <location>
        <begin position="278"/>
        <end position="298"/>
    </location>
</feature>
<feature type="transmembrane region" description="Helical; Name=9" evidence="1">
    <location>
        <begin position="318"/>
        <end position="338"/>
    </location>
</feature>
<feature type="transmembrane region" description="Helical; Name=10" evidence="1">
    <location>
        <begin position="343"/>
        <end position="363"/>
    </location>
</feature>
<feature type="transmembrane region" description="Helical; Name=11" evidence="1">
    <location>
        <begin position="377"/>
        <end position="397"/>
    </location>
</feature>
<dbReference type="EMBL" id="AB025615">
    <property type="protein sequence ID" value="BAA95749.1"/>
    <property type="status" value="ALT_SEQ"/>
    <property type="molecule type" value="Genomic_DNA"/>
</dbReference>
<dbReference type="EMBL" id="CP002686">
    <property type="protein sequence ID" value="AEE77515.1"/>
    <property type="molecule type" value="Genomic_DNA"/>
</dbReference>
<dbReference type="EMBL" id="CP002686">
    <property type="protein sequence ID" value="ANM65256.1"/>
    <property type="molecule type" value="Genomic_DNA"/>
</dbReference>
<dbReference type="EMBL" id="CP002686">
    <property type="protein sequence ID" value="ANM65258.1"/>
    <property type="molecule type" value="Genomic_DNA"/>
</dbReference>
<dbReference type="EMBL" id="CP002686">
    <property type="protein sequence ID" value="ANM65259.1"/>
    <property type="molecule type" value="Genomic_DNA"/>
</dbReference>
<dbReference type="RefSeq" id="NP_001319665.1">
    <property type="nucleotide sequence ID" value="NM_001338989.1"/>
</dbReference>
<dbReference type="RefSeq" id="NP_001327237.1">
    <property type="nucleotide sequence ID" value="NM_001338992.1"/>
</dbReference>
<dbReference type="RefSeq" id="NP_001327239.1">
    <property type="nucleotide sequence ID" value="NM_001338990.1"/>
</dbReference>
<dbReference type="RefSeq" id="NP_189538.2">
    <property type="nucleotide sequence ID" value="NM_113817.3"/>
</dbReference>
<dbReference type="SMR" id="F4J1Q9"/>
<dbReference type="FunCoup" id="F4J1Q9">
    <property type="interactions" value="273"/>
</dbReference>
<dbReference type="MetOSite" id="F4J1Q9"/>
<dbReference type="PaxDb" id="3702-AT3G28960.1"/>
<dbReference type="EnsemblPlants" id="AT3G28960.1">
    <property type="protein sequence ID" value="AT3G28960.1"/>
    <property type="gene ID" value="AT3G28960"/>
</dbReference>
<dbReference type="EnsemblPlants" id="AT3G28960.2">
    <property type="protein sequence ID" value="AT3G28960.2"/>
    <property type="gene ID" value="AT3G28960"/>
</dbReference>
<dbReference type="EnsemblPlants" id="AT3G28960.3">
    <property type="protein sequence ID" value="AT3G28960.3"/>
    <property type="gene ID" value="AT3G28960"/>
</dbReference>
<dbReference type="EnsemblPlants" id="AT3G28960.5">
    <property type="protein sequence ID" value="AT3G28960.5"/>
    <property type="gene ID" value="AT3G28960"/>
</dbReference>
<dbReference type="GeneID" id="822536"/>
<dbReference type="Gramene" id="AT3G28960.1">
    <property type="protein sequence ID" value="AT3G28960.1"/>
    <property type="gene ID" value="AT3G28960"/>
</dbReference>
<dbReference type="Gramene" id="AT3G28960.2">
    <property type="protein sequence ID" value="AT3G28960.2"/>
    <property type="gene ID" value="AT3G28960"/>
</dbReference>
<dbReference type="Gramene" id="AT3G28960.3">
    <property type="protein sequence ID" value="AT3G28960.3"/>
    <property type="gene ID" value="AT3G28960"/>
</dbReference>
<dbReference type="Gramene" id="AT3G28960.5">
    <property type="protein sequence ID" value="AT3G28960.5"/>
    <property type="gene ID" value="AT3G28960"/>
</dbReference>
<dbReference type="KEGG" id="ath:AT3G28960"/>
<dbReference type="Araport" id="AT3G28960"/>
<dbReference type="TAIR" id="AT3G28960"/>
<dbReference type="eggNOG" id="KOG1303">
    <property type="taxonomic scope" value="Eukaryota"/>
</dbReference>
<dbReference type="HOGENOM" id="CLU_009646_1_1_1"/>
<dbReference type="InParanoid" id="F4J1Q9"/>
<dbReference type="OMA" id="CAPEREI"/>
<dbReference type="PRO" id="PR:F4J1Q9"/>
<dbReference type="Proteomes" id="UP000006548">
    <property type="component" value="Chromosome 3"/>
</dbReference>
<dbReference type="ExpressionAtlas" id="F4J1Q9">
    <property type="expression patterns" value="baseline and differential"/>
</dbReference>
<dbReference type="GO" id="GO:0031090">
    <property type="term" value="C:organelle membrane"/>
    <property type="evidence" value="ECO:0007669"/>
    <property type="project" value="UniProtKB-ARBA"/>
</dbReference>
<dbReference type="GO" id="GO:0000325">
    <property type="term" value="C:plant-type vacuole"/>
    <property type="evidence" value="ECO:0007005"/>
    <property type="project" value="TAIR"/>
</dbReference>
<dbReference type="GO" id="GO:0006865">
    <property type="term" value="P:amino acid transport"/>
    <property type="evidence" value="ECO:0007669"/>
    <property type="project" value="UniProtKB-KW"/>
</dbReference>
<dbReference type="InterPro" id="IPR013057">
    <property type="entry name" value="AA_transpt_TM"/>
</dbReference>
<dbReference type="PANTHER" id="PTHR22950">
    <property type="entry name" value="AMINO ACID TRANSPORTER"/>
    <property type="match status" value="1"/>
</dbReference>
<dbReference type="PANTHER" id="PTHR22950:SF705">
    <property type="entry name" value="AMINO ACID TRANSPORTER AVT1I-LIKE"/>
    <property type="match status" value="1"/>
</dbReference>
<dbReference type="Pfam" id="PF01490">
    <property type="entry name" value="Aa_trans"/>
    <property type="match status" value="1"/>
</dbReference>
<gene>
    <name evidence="2" type="primary">AVT1I</name>
    <name evidence="4" type="ordered locus">At3g28960</name>
    <name evidence="5" type="ORF">K5K13.9</name>
</gene>
<proteinExistence type="inferred from homology"/>